<proteinExistence type="inferred from homology"/>
<comment type="function">
    <text evidence="1">Catalyzes the NADPH-dependent reduction of L-glutamate 5-phosphate into L-glutamate 5-semialdehyde and phosphate. The product spontaneously undergoes cyclization to form 1-pyrroline-5-carboxylate.</text>
</comment>
<comment type="catalytic activity">
    <reaction evidence="1">
        <text>L-glutamate 5-semialdehyde + phosphate + NADP(+) = L-glutamyl 5-phosphate + NADPH + H(+)</text>
        <dbReference type="Rhea" id="RHEA:19541"/>
        <dbReference type="ChEBI" id="CHEBI:15378"/>
        <dbReference type="ChEBI" id="CHEBI:43474"/>
        <dbReference type="ChEBI" id="CHEBI:57783"/>
        <dbReference type="ChEBI" id="CHEBI:58066"/>
        <dbReference type="ChEBI" id="CHEBI:58274"/>
        <dbReference type="ChEBI" id="CHEBI:58349"/>
        <dbReference type="EC" id="1.2.1.41"/>
    </reaction>
</comment>
<comment type="pathway">
    <text evidence="1">Amino-acid biosynthesis; L-proline biosynthesis; L-glutamate 5-semialdehyde from L-glutamate: step 2/2.</text>
</comment>
<comment type="subcellular location">
    <subcellularLocation>
        <location evidence="1">Cytoplasm</location>
    </subcellularLocation>
</comment>
<comment type="similarity">
    <text evidence="1">Belongs to the gamma-glutamyl phosphate reductase family.</text>
</comment>
<keyword id="KW-0028">Amino-acid biosynthesis</keyword>
<keyword id="KW-0963">Cytoplasm</keyword>
<keyword id="KW-0521">NADP</keyword>
<keyword id="KW-0560">Oxidoreductase</keyword>
<keyword id="KW-0641">Proline biosynthesis</keyword>
<evidence type="ECO:0000255" key="1">
    <source>
        <dbReference type="HAMAP-Rule" id="MF_00412"/>
    </source>
</evidence>
<organism>
    <name type="scientific">Shigella boydii serotype 4 (strain Sb227)</name>
    <dbReference type="NCBI Taxonomy" id="300268"/>
    <lineage>
        <taxon>Bacteria</taxon>
        <taxon>Pseudomonadati</taxon>
        <taxon>Pseudomonadota</taxon>
        <taxon>Gammaproteobacteria</taxon>
        <taxon>Enterobacterales</taxon>
        <taxon>Enterobacteriaceae</taxon>
        <taxon>Shigella</taxon>
    </lineage>
</organism>
<protein>
    <recommendedName>
        <fullName evidence="1">Gamma-glutamyl phosphate reductase</fullName>
        <shortName evidence="1">GPR</shortName>
        <ecNumber evidence="1">1.2.1.41</ecNumber>
    </recommendedName>
    <alternativeName>
        <fullName evidence="1">Glutamate-5-semialdehyde dehydrogenase</fullName>
    </alternativeName>
    <alternativeName>
        <fullName evidence="1">Glutamyl-gamma-semialdehyde dehydrogenase</fullName>
        <shortName evidence="1">GSA dehydrogenase</shortName>
    </alternativeName>
</protein>
<reference key="1">
    <citation type="journal article" date="2005" name="Nucleic Acids Res.">
        <title>Genome dynamics and diversity of Shigella species, the etiologic agents of bacillary dysentery.</title>
        <authorList>
            <person name="Yang F."/>
            <person name="Yang J."/>
            <person name="Zhang X."/>
            <person name="Chen L."/>
            <person name="Jiang Y."/>
            <person name="Yan Y."/>
            <person name="Tang X."/>
            <person name="Wang J."/>
            <person name="Xiong Z."/>
            <person name="Dong J."/>
            <person name="Xue Y."/>
            <person name="Zhu Y."/>
            <person name="Xu X."/>
            <person name="Sun L."/>
            <person name="Chen S."/>
            <person name="Nie H."/>
            <person name="Peng J."/>
            <person name="Xu J."/>
            <person name="Wang Y."/>
            <person name="Yuan Z."/>
            <person name="Wen Y."/>
            <person name="Yao Z."/>
            <person name="Shen Y."/>
            <person name="Qiang B."/>
            <person name="Hou Y."/>
            <person name="Yu J."/>
            <person name="Jin Q."/>
        </authorList>
    </citation>
    <scope>NUCLEOTIDE SEQUENCE [LARGE SCALE GENOMIC DNA]</scope>
    <source>
        <strain>Sb227</strain>
    </source>
</reference>
<accession>Q325P3</accession>
<feature type="chain" id="PRO_0000230022" description="Gamma-glutamyl phosphate reductase">
    <location>
        <begin position="1"/>
        <end position="417"/>
    </location>
</feature>
<gene>
    <name evidence="1" type="primary">proA</name>
    <name type="ordered locus">SBO_0249</name>
</gene>
<name>PROA_SHIBS</name>
<sequence>MLEQMGIAAKQASYKLAQLSSREKNRVLEKIADELEAQSEIILNANAQDVADARANGLSEAMLDRLALTPARLKGIADDVRQVCNLADPVGQVIDGGVLDSGLRLERRRVPLGVIGVIYEARPNVTVDVASLCLKTGNAVILRGGKETCRTNAATVAVIQDALKSCGLPAGAVQAIDNPDRALVSEMLRMDKYIDMLIPRGGAGLHKLCREQSTIPVITGGIGVCHIYVDESVEIAEALKVIVNAKTQRPSTCNTVETLLVNKNIADSFLPALSKQMAESGVTLHADAAALAQLQAGPAKVVAVKAEEYDDEFLSLDLNVKIVSDLDDAIAHIREHGTQHSDAILTCDMRNAQRFVNEVDSSAVYVNASTRFTDGGQFGLGAEVAVSTQKLHARGPMGLEALTTYKWIGIGDYTIRA</sequence>
<dbReference type="EC" id="1.2.1.41" evidence="1"/>
<dbReference type="EMBL" id="CP000036">
    <property type="protein sequence ID" value="ABB64965.1"/>
    <property type="molecule type" value="Genomic_DNA"/>
</dbReference>
<dbReference type="RefSeq" id="WP_000893275.1">
    <property type="nucleotide sequence ID" value="NC_007613.1"/>
</dbReference>
<dbReference type="SMR" id="Q325P3"/>
<dbReference type="KEGG" id="sbo:SBO_0249"/>
<dbReference type="HOGENOM" id="CLU_030231_0_0_6"/>
<dbReference type="UniPathway" id="UPA00098">
    <property type="reaction ID" value="UER00360"/>
</dbReference>
<dbReference type="Proteomes" id="UP000007067">
    <property type="component" value="Chromosome"/>
</dbReference>
<dbReference type="GO" id="GO:0005737">
    <property type="term" value="C:cytoplasm"/>
    <property type="evidence" value="ECO:0007669"/>
    <property type="project" value="UniProtKB-SubCell"/>
</dbReference>
<dbReference type="GO" id="GO:0004350">
    <property type="term" value="F:glutamate-5-semialdehyde dehydrogenase activity"/>
    <property type="evidence" value="ECO:0007669"/>
    <property type="project" value="UniProtKB-UniRule"/>
</dbReference>
<dbReference type="GO" id="GO:0050661">
    <property type="term" value="F:NADP binding"/>
    <property type="evidence" value="ECO:0007669"/>
    <property type="project" value="InterPro"/>
</dbReference>
<dbReference type="GO" id="GO:0055129">
    <property type="term" value="P:L-proline biosynthetic process"/>
    <property type="evidence" value="ECO:0007669"/>
    <property type="project" value="UniProtKB-UniRule"/>
</dbReference>
<dbReference type="CDD" id="cd07079">
    <property type="entry name" value="ALDH_F18-19_ProA-GPR"/>
    <property type="match status" value="1"/>
</dbReference>
<dbReference type="FunFam" id="3.40.309.10:FF:000006">
    <property type="entry name" value="Gamma-glutamyl phosphate reductase"/>
    <property type="match status" value="1"/>
</dbReference>
<dbReference type="Gene3D" id="3.40.605.10">
    <property type="entry name" value="Aldehyde Dehydrogenase, Chain A, domain 1"/>
    <property type="match status" value="1"/>
</dbReference>
<dbReference type="Gene3D" id="3.40.309.10">
    <property type="entry name" value="Aldehyde Dehydrogenase, Chain A, domain 2"/>
    <property type="match status" value="1"/>
</dbReference>
<dbReference type="HAMAP" id="MF_00412">
    <property type="entry name" value="ProA"/>
    <property type="match status" value="1"/>
</dbReference>
<dbReference type="InterPro" id="IPR016161">
    <property type="entry name" value="Ald_DH/histidinol_DH"/>
</dbReference>
<dbReference type="InterPro" id="IPR016163">
    <property type="entry name" value="Ald_DH_C"/>
</dbReference>
<dbReference type="InterPro" id="IPR016162">
    <property type="entry name" value="Ald_DH_N"/>
</dbReference>
<dbReference type="InterPro" id="IPR015590">
    <property type="entry name" value="Aldehyde_DH_dom"/>
</dbReference>
<dbReference type="InterPro" id="IPR020593">
    <property type="entry name" value="G-glutamylP_reductase_CS"/>
</dbReference>
<dbReference type="InterPro" id="IPR012134">
    <property type="entry name" value="Glu-5-SA_DH"/>
</dbReference>
<dbReference type="InterPro" id="IPR000965">
    <property type="entry name" value="GPR_dom"/>
</dbReference>
<dbReference type="NCBIfam" id="NF001221">
    <property type="entry name" value="PRK00197.1"/>
    <property type="match status" value="1"/>
</dbReference>
<dbReference type="NCBIfam" id="TIGR00407">
    <property type="entry name" value="proA"/>
    <property type="match status" value="1"/>
</dbReference>
<dbReference type="PANTHER" id="PTHR11063:SF8">
    <property type="entry name" value="DELTA-1-PYRROLINE-5-CARBOXYLATE SYNTHASE"/>
    <property type="match status" value="1"/>
</dbReference>
<dbReference type="PANTHER" id="PTHR11063">
    <property type="entry name" value="GLUTAMATE SEMIALDEHYDE DEHYDROGENASE"/>
    <property type="match status" value="1"/>
</dbReference>
<dbReference type="Pfam" id="PF00171">
    <property type="entry name" value="Aldedh"/>
    <property type="match status" value="1"/>
</dbReference>
<dbReference type="PIRSF" id="PIRSF000151">
    <property type="entry name" value="GPR"/>
    <property type="match status" value="1"/>
</dbReference>
<dbReference type="SUPFAM" id="SSF53720">
    <property type="entry name" value="ALDH-like"/>
    <property type="match status" value="1"/>
</dbReference>
<dbReference type="PROSITE" id="PS01223">
    <property type="entry name" value="PROA"/>
    <property type="match status" value="1"/>
</dbReference>